<organism>
    <name type="scientific">Haemophilus influenzae (strain ATCC 51907 / DSM 11121 / KW20 / Rd)</name>
    <dbReference type="NCBI Taxonomy" id="71421"/>
    <lineage>
        <taxon>Bacteria</taxon>
        <taxon>Pseudomonadati</taxon>
        <taxon>Pseudomonadota</taxon>
        <taxon>Gammaproteobacteria</taxon>
        <taxon>Pasteurellales</taxon>
        <taxon>Pasteurellaceae</taxon>
        <taxon>Haemophilus</taxon>
    </lineage>
</organism>
<name>LEUC_HAEIN</name>
<feature type="initiator methionine" description="Removed" evidence="1">
    <location>
        <position position="1"/>
    </location>
</feature>
<feature type="chain" id="PRO_0000076751" description="3-isopropylmalate dehydratase large subunit">
    <location>
        <begin position="2"/>
        <end position="469"/>
    </location>
</feature>
<feature type="binding site" evidence="2">
    <location>
        <position position="347"/>
    </location>
    <ligand>
        <name>[4Fe-4S] cluster</name>
        <dbReference type="ChEBI" id="CHEBI:49883"/>
    </ligand>
</feature>
<feature type="binding site" evidence="2">
    <location>
        <position position="408"/>
    </location>
    <ligand>
        <name>[4Fe-4S] cluster</name>
        <dbReference type="ChEBI" id="CHEBI:49883"/>
    </ligand>
</feature>
<feature type="binding site" evidence="2">
    <location>
        <position position="411"/>
    </location>
    <ligand>
        <name>[4Fe-4S] cluster</name>
        <dbReference type="ChEBI" id="CHEBI:49883"/>
    </ligand>
</feature>
<accession>P44968</accession>
<reference key="1">
    <citation type="journal article" date="1995" name="Science">
        <title>Whole-genome random sequencing and assembly of Haemophilus influenzae Rd.</title>
        <authorList>
            <person name="Fleischmann R.D."/>
            <person name="Adams M.D."/>
            <person name="White O."/>
            <person name="Clayton R.A."/>
            <person name="Kirkness E.F."/>
            <person name="Kerlavage A.R."/>
            <person name="Bult C.J."/>
            <person name="Tomb J.-F."/>
            <person name="Dougherty B.A."/>
            <person name="Merrick J.M."/>
            <person name="McKenney K."/>
            <person name="Sutton G.G."/>
            <person name="FitzHugh W."/>
            <person name="Fields C.A."/>
            <person name="Gocayne J.D."/>
            <person name="Scott J.D."/>
            <person name="Shirley R."/>
            <person name="Liu L.-I."/>
            <person name="Glodek A."/>
            <person name="Kelley J.M."/>
            <person name="Weidman J.F."/>
            <person name="Phillips C.A."/>
            <person name="Spriggs T."/>
            <person name="Hedblom E."/>
            <person name="Cotton M.D."/>
            <person name="Utterback T.R."/>
            <person name="Hanna M.C."/>
            <person name="Nguyen D.T."/>
            <person name="Saudek D.M."/>
            <person name="Brandon R.C."/>
            <person name="Fine L.D."/>
            <person name="Fritchman J.L."/>
            <person name="Fuhrmann J.L."/>
            <person name="Geoghagen N.S.M."/>
            <person name="Gnehm C.L."/>
            <person name="McDonald L.A."/>
            <person name="Small K.V."/>
            <person name="Fraser C.M."/>
            <person name="Smith H.O."/>
            <person name="Venter J.C."/>
        </authorList>
    </citation>
    <scope>NUCLEOTIDE SEQUENCE [LARGE SCALE GENOMIC DNA]</scope>
    <source>
        <strain>ATCC 51907 / DSM 11121 / KW20 / Rd</strain>
    </source>
</reference>
<protein>
    <recommendedName>
        <fullName evidence="2">3-isopropylmalate dehydratase large subunit</fullName>
        <ecNumber evidence="2">4.2.1.33</ecNumber>
    </recommendedName>
    <alternativeName>
        <fullName evidence="2">Alpha-IPM isomerase</fullName>
        <shortName evidence="2">IPMI</shortName>
    </alternativeName>
    <alternativeName>
        <fullName evidence="2">Isopropylmalate isomerase</fullName>
    </alternativeName>
</protein>
<sequence length="469" mass="50874">MAKTLYEKLFDSHIVYEAEGETPILYINRHLIHEVTSPQAFDGLRVANRQVRQVNKTFGTMDHSISTQVRDVNKLEGQAKIQVLELDKNTKATGIKLFDITTKEQGIVHVMGPEQGLTLPGMTIVCGDSHTATHGAFGALAFGIGTSEVEHVLATQTLKQARAKSMKIEVRGKVASGITAKDIILAIIGKTTMAGGTGHVVEFCGEAIQDLSMEGRMTVCNMAIEMGAKAGLIAPDETTFAYLKDRPHAPKGKDWEDAVAYWKTLKSDDDAQFDTVVTLEAKDIAPQVTWGTNPGQVISVNETIPNPQEMADPVQRASAEKALHYIGLEAGTNLKDIKVDQVFIGSCTNSRIEDLRAAAAVMKGRKKADNVKRILVVPGSGLVKEQAEKEGLDKIFIAAGAEWRNPGCSMCLGMNDDRLGEWERCASTSNRNFEGRQGRNGRTHLVSPAMAAAAGVFGKFVDIRDVTLN</sequence>
<proteinExistence type="inferred from homology"/>
<evidence type="ECO:0000250" key="1"/>
<evidence type="ECO:0000255" key="2">
    <source>
        <dbReference type="HAMAP-Rule" id="MF_01026"/>
    </source>
</evidence>
<gene>
    <name evidence="2" type="primary">leuC</name>
    <name type="ordered locus">HI_0988</name>
</gene>
<dbReference type="EC" id="4.2.1.33" evidence="2"/>
<dbReference type="EMBL" id="L42023">
    <property type="protein sequence ID" value="AAC22649.1"/>
    <property type="molecule type" value="Genomic_DNA"/>
</dbReference>
<dbReference type="PIR" id="F64163">
    <property type="entry name" value="F64163"/>
</dbReference>
<dbReference type="RefSeq" id="NP_439151.1">
    <property type="nucleotide sequence ID" value="NC_000907.1"/>
</dbReference>
<dbReference type="SMR" id="P44968"/>
<dbReference type="STRING" id="71421.HI_0988"/>
<dbReference type="DNASU" id="950815"/>
<dbReference type="EnsemblBacteria" id="AAC22649">
    <property type="protein sequence ID" value="AAC22649"/>
    <property type="gene ID" value="HI_0988"/>
</dbReference>
<dbReference type="KEGG" id="hin:HI_0988"/>
<dbReference type="PATRIC" id="fig|71421.8.peg.1031"/>
<dbReference type="eggNOG" id="COG0065">
    <property type="taxonomic scope" value="Bacteria"/>
</dbReference>
<dbReference type="HOGENOM" id="CLU_006714_3_4_6"/>
<dbReference type="OrthoDB" id="9802769at2"/>
<dbReference type="PhylomeDB" id="P44968"/>
<dbReference type="BioCyc" id="HINF71421:G1GJ1-1030-MONOMER"/>
<dbReference type="UniPathway" id="UPA00048">
    <property type="reaction ID" value="UER00071"/>
</dbReference>
<dbReference type="Proteomes" id="UP000000579">
    <property type="component" value="Chromosome"/>
</dbReference>
<dbReference type="GO" id="GO:0003861">
    <property type="term" value="F:3-isopropylmalate dehydratase activity"/>
    <property type="evidence" value="ECO:0007669"/>
    <property type="project" value="UniProtKB-UniRule"/>
</dbReference>
<dbReference type="GO" id="GO:0051539">
    <property type="term" value="F:4 iron, 4 sulfur cluster binding"/>
    <property type="evidence" value="ECO:0007669"/>
    <property type="project" value="UniProtKB-KW"/>
</dbReference>
<dbReference type="GO" id="GO:0046872">
    <property type="term" value="F:metal ion binding"/>
    <property type="evidence" value="ECO:0007669"/>
    <property type="project" value="UniProtKB-KW"/>
</dbReference>
<dbReference type="GO" id="GO:0009098">
    <property type="term" value="P:L-leucine biosynthetic process"/>
    <property type="evidence" value="ECO:0007669"/>
    <property type="project" value="UniProtKB-UniRule"/>
</dbReference>
<dbReference type="CDD" id="cd01583">
    <property type="entry name" value="IPMI"/>
    <property type="match status" value="1"/>
</dbReference>
<dbReference type="FunFam" id="3.30.499.10:FF:000006">
    <property type="entry name" value="3-isopropylmalate dehydratase large subunit"/>
    <property type="match status" value="1"/>
</dbReference>
<dbReference type="FunFam" id="3.30.499.10:FF:000007">
    <property type="entry name" value="3-isopropylmalate dehydratase large subunit"/>
    <property type="match status" value="1"/>
</dbReference>
<dbReference type="Gene3D" id="3.30.499.10">
    <property type="entry name" value="Aconitase, domain 3"/>
    <property type="match status" value="2"/>
</dbReference>
<dbReference type="HAMAP" id="MF_01026">
    <property type="entry name" value="LeuC_type1"/>
    <property type="match status" value="1"/>
</dbReference>
<dbReference type="InterPro" id="IPR004430">
    <property type="entry name" value="3-IsopropMal_deHydase_lsu"/>
</dbReference>
<dbReference type="InterPro" id="IPR015931">
    <property type="entry name" value="Acnase/IPM_dHydase_lsu_aba_1/3"/>
</dbReference>
<dbReference type="InterPro" id="IPR001030">
    <property type="entry name" value="Acoase/IPM_deHydtase_lsu_aba"/>
</dbReference>
<dbReference type="InterPro" id="IPR018136">
    <property type="entry name" value="Aconitase_4Fe-4S_BS"/>
</dbReference>
<dbReference type="InterPro" id="IPR036008">
    <property type="entry name" value="Aconitase_4Fe-4S_dom"/>
</dbReference>
<dbReference type="InterPro" id="IPR050067">
    <property type="entry name" value="IPM_dehydratase_rel_enz"/>
</dbReference>
<dbReference type="InterPro" id="IPR033941">
    <property type="entry name" value="IPMI_cat"/>
</dbReference>
<dbReference type="NCBIfam" id="TIGR00170">
    <property type="entry name" value="leuC"/>
    <property type="match status" value="1"/>
</dbReference>
<dbReference type="NCBIfam" id="NF004016">
    <property type="entry name" value="PRK05478.1"/>
    <property type="match status" value="1"/>
</dbReference>
<dbReference type="NCBIfam" id="NF009116">
    <property type="entry name" value="PRK12466.1"/>
    <property type="match status" value="1"/>
</dbReference>
<dbReference type="PANTHER" id="PTHR43822:SF9">
    <property type="entry name" value="3-ISOPROPYLMALATE DEHYDRATASE"/>
    <property type="match status" value="1"/>
</dbReference>
<dbReference type="PANTHER" id="PTHR43822">
    <property type="entry name" value="HOMOACONITASE, MITOCHONDRIAL-RELATED"/>
    <property type="match status" value="1"/>
</dbReference>
<dbReference type="Pfam" id="PF00330">
    <property type="entry name" value="Aconitase"/>
    <property type="match status" value="1"/>
</dbReference>
<dbReference type="PRINTS" id="PR00415">
    <property type="entry name" value="ACONITASE"/>
</dbReference>
<dbReference type="SUPFAM" id="SSF53732">
    <property type="entry name" value="Aconitase iron-sulfur domain"/>
    <property type="match status" value="1"/>
</dbReference>
<dbReference type="PROSITE" id="PS00450">
    <property type="entry name" value="ACONITASE_1"/>
    <property type="match status" value="1"/>
</dbReference>
<dbReference type="PROSITE" id="PS01244">
    <property type="entry name" value="ACONITASE_2"/>
    <property type="match status" value="1"/>
</dbReference>
<comment type="function">
    <text evidence="2">Catalyzes the isomerization between 2-isopropylmalate and 3-isopropylmalate, via the formation of 2-isopropylmaleate.</text>
</comment>
<comment type="catalytic activity">
    <reaction evidence="2">
        <text>(2R,3S)-3-isopropylmalate = (2S)-2-isopropylmalate</text>
        <dbReference type="Rhea" id="RHEA:32287"/>
        <dbReference type="ChEBI" id="CHEBI:1178"/>
        <dbReference type="ChEBI" id="CHEBI:35121"/>
        <dbReference type="EC" id="4.2.1.33"/>
    </reaction>
</comment>
<comment type="cofactor">
    <cofactor evidence="2">
        <name>[4Fe-4S] cluster</name>
        <dbReference type="ChEBI" id="CHEBI:49883"/>
    </cofactor>
    <text evidence="2">Binds 1 [4Fe-4S] cluster per subunit.</text>
</comment>
<comment type="pathway">
    <text evidence="2">Amino-acid biosynthesis; L-leucine biosynthesis; L-leucine from 3-methyl-2-oxobutanoate: step 2/4.</text>
</comment>
<comment type="subunit">
    <text evidence="2">Heterodimer of LeuC and LeuD.</text>
</comment>
<comment type="similarity">
    <text evidence="2">Belongs to the aconitase/IPM isomerase family. LeuC type 1 subfamily.</text>
</comment>
<keyword id="KW-0004">4Fe-4S</keyword>
<keyword id="KW-0028">Amino-acid biosynthesis</keyword>
<keyword id="KW-0100">Branched-chain amino acid biosynthesis</keyword>
<keyword id="KW-0408">Iron</keyword>
<keyword id="KW-0411">Iron-sulfur</keyword>
<keyword id="KW-0432">Leucine biosynthesis</keyword>
<keyword id="KW-0456">Lyase</keyword>
<keyword id="KW-0479">Metal-binding</keyword>
<keyword id="KW-1185">Reference proteome</keyword>